<organism>
    <name type="scientific">Shewanella baltica (strain OS223)</name>
    <dbReference type="NCBI Taxonomy" id="407976"/>
    <lineage>
        <taxon>Bacteria</taxon>
        <taxon>Pseudomonadati</taxon>
        <taxon>Pseudomonadota</taxon>
        <taxon>Gammaproteobacteria</taxon>
        <taxon>Alteromonadales</taxon>
        <taxon>Shewanellaceae</taxon>
        <taxon>Shewanella</taxon>
    </lineage>
</organism>
<dbReference type="EC" id="3.5.1.18" evidence="1"/>
<dbReference type="EMBL" id="CP001252">
    <property type="protein sequence ID" value="ACK46496.1"/>
    <property type="status" value="ALT_INIT"/>
    <property type="molecule type" value="Genomic_DNA"/>
</dbReference>
<dbReference type="RefSeq" id="WP_190273086.1">
    <property type="nucleotide sequence ID" value="NC_011663.1"/>
</dbReference>
<dbReference type="SMR" id="B8EA23"/>
<dbReference type="KEGG" id="sbp:Sbal223_1992"/>
<dbReference type="HOGENOM" id="CLU_021802_4_0_6"/>
<dbReference type="UniPathway" id="UPA00034">
    <property type="reaction ID" value="UER00021"/>
</dbReference>
<dbReference type="Proteomes" id="UP000002507">
    <property type="component" value="Chromosome"/>
</dbReference>
<dbReference type="GO" id="GO:0008777">
    <property type="term" value="F:acetylornithine deacetylase activity"/>
    <property type="evidence" value="ECO:0007669"/>
    <property type="project" value="TreeGrafter"/>
</dbReference>
<dbReference type="GO" id="GO:0050897">
    <property type="term" value="F:cobalt ion binding"/>
    <property type="evidence" value="ECO:0007669"/>
    <property type="project" value="UniProtKB-UniRule"/>
</dbReference>
<dbReference type="GO" id="GO:0009014">
    <property type="term" value="F:succinyl-diaminopimelate desuccinylase activity"/>
    <property type="evidence" value="ECO:0007669"/>
    <property type="project" value="UniProtKB-UniRule"/>
</dbReference>
<dbReference type="GO" id="GO:0008270">
    <property type="term" value="F:zinc ion binding"/>
    <property type="evidence" value="ECO:0007669"/>
    <property type="project" value="UniProtKB-UniRule"/>
</dbReference>
<dbReference type="GO" id="GO:0019877">
    <property type="term" value="P:diaminopimelate biosynthetic process"/>
    <property type="evidence" value="ECO:0007669"/>
    <property type="project" value="UniProtKB-UniRule"/>
</dbReference>
<dbReference type="GO" id="GO:0006526">
    <property type="term" value="P:L-arginine biosynthetic process"/>
    <property type="evidence" value="ECO:0007669"/>
    <property type="project" value="TreeGrafter"/>
</dbReference>
<dbReference type="GO" id="GO:0009089">
    <property type="term" value="P:lysine biosynthetic process via diaminopimelate"/>
    <property type="evidence" value="ECO:0007669"/>
    <property type="project" value="UniProtKB-UniRule"/>
</dbReference>
<dbReference type="CDD" id="cd03891">
    <property type="entry name" value="M20_DapE_proteobac"/>
    <property type="match status" value="1"/>
</dbReference>
<dbReference type="FunFam" id="3.30.70.360:FF:000011">
    <property type="entry name" value="Succinyl-diaminopimelate desuccinylase"/>
    <property type="match status" value="1"/>
</dbReference>
<dbReference type="FunFam" id="3.40.630.10:FF:000005">
    <property type="entry name" value="Succinyl-diaminopimelate desuccinylase"/>
    <property type="match status" value="1"/>
</dbReference>
<dbReference type="Gene3D" id="3.40.630.10">
    <property type="entry name" value="Zn peptidases"/>
    <property type="match status" value="2"/>
</dbReference>
<dbReference type="HAMAP" id="MF_01690">
    <property type="entry name" value="DapE"/>
    <property type="match status" value="1"/>
</dbReference>
<dbReference type="InterPro" id="IPR001261">
    <property type="entry name" value="ArgE/DapE_CS"/>
</dbReference>
<dbReference type="InterPro" id="IPR036264">
    <property type="entry name" value="Bact_exopeptidase_dim_dom"/>
</dbReference>
<dbReference type="InterPro" id="IPR005941">
    <property type="entry name" value="DapE_proteobac"/>
</dbReference>
<dbReference type="InterPro" id="IPR002933">
    <property type="entry name" value="Peptidase_M20"/>
</dbReference>
<dbReference type="InterPro" id="IPR011650">
    <property type="entry name" value="Peptidase_M20_dimer"/>
</dbReference>
<dbReference type="InterPro" id="IPR050072">
    <property type="entry name" value="Peptidase_M20A"/>
</dbReference>
<dbReference type="NCBIfam" id="TIGR01246">
    <property type="entry name" value="dapE_proteo"/>
    <property type="match status" value="1"/>
</dbReference>
<dbReference type="NCBIfam" id="NF009557">
    <property type="entry name" value="PRK13009.1"/>
    <property type="match status" value="1"/>
</dbReference>
<dbReference type="PANTHER" id="PTHR43808">
    <property type="entry name" value="ACETYLORNITHINE DEACETYLASE"/>
    <property type="match status" value="1"/>
</dbReference>
<dbReference type="PANTHER" id="PTHR43808:SF31">
    <property type="entry name" value="N-ACETYL-L-CITRULLINE DEACETYLASE"/>
    <property type="match status" value="1"/>
</dbReference>
<dbReference type="Pfam" id="PF07687">
    <property type="entry name" value="M20_dimer"/>
    <property type="match status" value="1"/>
</dbReference>
<dbReference type="Pfam" id="PF01546">
    <property type="entry name" value="Peptidase_M20"/>
    <property type="match status" value="1"/>
</dbReference>
<dbReference type="SUPFAM" id="SSF55031">
    <property type="entry name" value="Bacterial exopeptidase dimerisation domain"/>
    <property type="match status" value="1"/>
</dbReference>
<dbReference type="SUPFAM" id="SSF53187">
    <property type="entry name" value="Zn-dependent exopeptidases"/>
    <property type="match status" value="1"/>
</dbReference>
<dbReference type="PROSITE" id="PS00759">
    <property type="entry name" value="ARGE_DAPE_CPG2_2"/>
    <property type="match status" value="1"/>
</dbReference>
<gene>
    <name evidence="1" type="primary">dapE</name>
    <name type="ordered locus">Sbal223_1992</name>
</gene>
<comment type="function">
    <text evidence="1">Catalyzes the hydrolysis of N-succinyl-L,L-diaminopimelic acid (SDAP), forming succinate and LL-2,6-diaminopimelate (DAP), an intermediate involved in the bacterial biosynthesis of lysine and meso-diaminopimelic acid, an essential component of bacterial cell walls.</text>
</comment>
<comment type="catalytic activity">
    <reaction evidence="1">
        <text>N-succinyl-(2S,6S)-2,6-diaminopimelate + H2O = (2S,6S)-2,6-diaminopimelate + succinate</text>
        <dbReference type="Rhea" id="RHEA:22608"/>
        <dbReference type="ChEBI" id="CHEBI:15377"/>
        <dbReference type="ChEBI" id="CHEBI:30031"/>
        <dbReference type="ChEBI" id="CHEBI:57609"/>
        <dbReference type="ChEBI" id="CHEBI:58087"/>
        <dbReference type="EC" id="3.5.1.18"/>
    </reaction>
</comment>
<comment type="cofactor">
    <cofactor evidence="1">
        <name>Zn(2+)</name>
        <dbReference type="ChEBI" id="CHEBI:29105"/>
    </cofactor>
    <cofactor evidence="1">
        <name>Co(2+)</name>
        <dbReference type="ChEBI" id="CHEBI:48828"/>
    </cofactor>
    <text evidence="1">Binds 2 Zn(2+) or Co(2+) ions per subunit.</text>
</comment>
<comment type="pathway">
    <text evidence="1">Amino-acid biosynthesis; L-lysine biosynthesis via DAP pathway; LL-2,6-diaminopimelate from (S)-tetrahydrodipicolinate (succinylase route): step 3/3.</text>
</comment>
<comment type="subunit">
    <text evidence="1">Homodimer.</text>
</comment>
<comment type="similarity">
    <text evidence="1">Belongs to the peptidase M20A family. DapE subfamily.</text>
</comment>
<comment type="sequence caution" evidence="2">
    <conflict type="erroneous initiation">
        <sequence resource="EMBL-CDS" id="ACK46496"/>
    </conflict>
</comment>
<feature type="chain" id="PRO_0000375729" description="Succinyl-diaminopimelate desuccinylase">
    <location>
        <begin position="1"/>
        <end position="379"/>
    </location>
</feature>
<feature type="active site" evidence="1">
    <location>
        <position position="72"/>
    </location>
</feature>
<feature type="active site" description="Proton acceptor" evidence="1">
    <location>
        <position position="137"/>
    </location>
</feature>
<feature type="binding site" evidence="1">
    <location>
        <position position="70"/>
    </location>
    <ligand>
        <name>Zn(2+)</name>
        <dbReference type="ChEBI" id="CHEBI:29105"/>
        <label>1</label>
    </ligand>
</feature>
<feature type="binding site" evidence="1">
    <location>
        <position position="103"/>
    </location>
    <ligand>
        <name>Zn(2+)</name>
        <dbReference type="ChEBI" id="CHEBI:29105"/>
        <label>1</label>
    </ligand>
</feature>
<feature type="binding site" evidence="1">
    <location>
        <position position="103"/>
    </location>
    <ligand>
        <name>Zn(2+)</name>
        <dbReference type="ChEBI" id="CHEBI:29105"/>
        <label>2</label>
    </ligand>
</feature>
<feature type="binding site" evidence="1">
    <location>
        <position position="138"/>
    </location>
    <ligand>
        <name>Zn(2+)</name>
        <dbReference type="ChEBI" id="CHEBI:29105"/>
        <label>2</label>
    </ligand>
</feature>
<feature type="binding site" evidence="1">
    <location>
        <position position="166"/>
    </location>
    <ligand>
        <name>Zn(2+)</name>
        <dbReference type="ChEBI" id="CHEBI:29105"/>
        <label>1</label>
    </ligand>
</feature>
<feature type="binding site" evidence="1">
    <location>
        <position position="352"/>
    </location>
    <ligand>
        <name>Zn(2+)</name>
        <dbReference type="ChEBI" id="CHEBI:29105"/>
        <label>2</label>
    </ligand>
</feature>
<protein>
    <recommendedName>
        <fullName evidence="1">Succinyl-diaminopimelate desuccinylase</fullName>
        <shortName evidence="1">SDAP desuccinylase</shortName>
        <ecNumber evidence="1">3.5.1.18</ecNumber>
    </recommendedName>
    <alternativeName>
        <fullName evidence="1">N-succinyl-LL-2,6-diaminoheptanedioate amidohydrolase</fullName>
    </alternativeName>
</protein>
<reference key="1">
    <citation type="submission" date="2008-12" db="EMBL/GenBank/DDBJ databases">
        <title>Complete sequence of chromosome of Shewanella baltica OS223.</title>
        <authorList>
            <consortium name="US DOE Joint Genome Institute"/>
            <person name="Lucas S."/>
            <person name="Copeland A."/>
            <person name="Lapidus A."/>
            <person name="Glavina del Rio T."/>
            <person name="Dalin E."/>
            <person name="Tice H."/>
            <person name="Bruce D."/>
            <person name="Goodwin L."/>
            <person name="Pitluck S."/>
            <person name="Chertkov O."/>
            <person name="Meincke L."/>
            <person name="Brettin T."/>
            <person name="Detter J.C."/>
            <person name="Han C."/>
            <person name="Kuske C.R."/>
            <person name="Larimer F."/>
            <person name="Land M."/>
            <person name="Hauser L."/>
            <person name="Kyrpides N."/>
            <person name="Ovchinnikova G."/>
            <person name="Brettar I."/>
            <person name="Rodrigues J."/>
            <person name="Konstantinidis K."/>
            <person name="Tiedje J."/>
        </authorList>
    </citation>
    <scope>NUCLEOTIDE SEQUENCE [LARGE SCALE GENOMIC DNA]</scope>
    <source>
        <strain>OS223</strain>
    </source>
</reference>
<name>DAPE_SHEB2</name>
<evidence type="ECO:0000255" key="1">
    <source>
        <dbReference type="HAMAP-Rule" id="MF_01690"/>
    </source>
</evidence>
<evidence type="ECO:0000305" key="2"/>
<proteinExistence type="inferred from homology"/>
<sequence length="379" mass="41211">MPADDYPVTELTKALIARPSVTPLDEGCQTLMAERLSAIGFNIEPMVFEDTTNMWARRGNEGPVFCFAGHTDVVPTGDVSRWHTPPFVPTIIDGYLYGRGAADMKGSLAAMVIATERFVAKHPDHNGSIAFLITSDEEGPFINGTTRVIDTLEARNEKITWALVGEPSSTLKLGDVVKNGRRGSLTGNLTVKGIQGHVAYPHLADNPIHKAAPFLAELSQMHWDNGNEFFPPTSFQIANINGGTGASNVIPGALDVMFNFRYSTEVTADILIERVETLLKAHELDYDISWIFNGLPFLTGDGPLLDATRIAIRQVTGYETDPQTTGGTSDGRFIAPTGAKVLELGPVNATIHKVNECVKVDDLEQLALCYEVILEQLLC</sequence>
<keyword id="KW-0028">Amino-acid biosynthesis</keyword>
<keyword id="KW-0170">Cobalt</keyword>
<keyword id="KW-0220">Diaminopimelate biosynthesis</keyword>
<keyword id="KW-0378">Hydrolase</keyword>
<keyword id="KW-0457">Lysine biosynthesis</keyword>
<keyword id="KW-0479">Metal-binding</keyword>
<keyword id="KW-0862">Zinc</keyword>
<accession>B8EA23</accession>